<gene>
    <name type="primary">OPG088</name>
    <name type="ordered locus">VACWR081</name>
    <name type="ORF">G4L</name>
</gene>
<comment type="function">
    <text evidence="1 2 3 6">Glutaredoxin necessary for virion morphogenesis and virus replication. Functions as a thiol-disulfide transfer protein between membrane-associated OPG128/A2.5 and substrates OPG095/L1 or OPG053/F9. The complete pathway for formation of disulfide bonds in intracellular virion membrane proteins sequentially involves oxidation of OPG072/E10, OPG128/A2.5 and OPG088/G4. Exhibit thioltransferase and dehydroascorbate reductase activities in vitro.</text>
</comment>
<comment type="subunit">
    <text evidence="4 7">Homodimer.</text>
</comment>
<comment type="subcellular location">
    <subcellularLocation>
        <location>Host cytoplasm</location>
    </subcellularLocation>
</comment>
<comment type="induction">
    <text evidence="5">Expressed in the intermediate phase of the viral replicative cycle.</text>
</comment>
<comment type="similarity">
    <text evidence="7">Belongs to the glutaredoxin family.</text>
</comment>
<organism>
    <name type="scientific">Vaccinia virus (strain Western Reserve)</name>
    <name type="common">VACV</name>
    <name type="synonym">Vaccinia virus (strain WR)</name>
    <dbReference type="NCBI Taxonomy" id="10254"/>
    <lineage>
        <taxon>Viruses</taxon>
        <taxon>Varidnaviria</taxon>
        <taxon>Bamfordvirae</taxon>
        <taxon>Nucleocytoviricota</taxon>
        <taxon>Pokkesviricetes</taxon>
        <taxon>Chitovirales</taxon>
        <taxon>Poxviridae</taxon>
        <taxon>Chordopoxvirinae</taxon>
        <taxon>Orthopoxvirus</taxon>
        <taxon>Vaccinia virus</taxon>
    </lineage>
</organism>
<accession>P68460</accession>
<accession>P21025</accession>
<accession>Q76ZU1</accession>
<reference key="1">
    <citation type="journal article" date="1991" name="Virology">
        <title>Genetic and molecular biological characterization of a vaccinia virus gene which renders the virus dependent on isatin-beta-thiosemicarbazone (IBT).</title>
        <authorList>
            <person name="Meis R.J."/>
            <person name="Condit R.C."/>
        </authorList>
    </citation>
    <scope>NUCLEOTIDE SEQUENCE [GENOMIC DNA]</scope>
</reference>
<reference key="2">
    <citation type="submission" date="2003-02" db="EMBL/GenBank/DDBJ databases">
        <title>Sequencing of the coding region of Vaccinia-WR to an average 9-fold redundancy and an error rate of 0.16/10kb.</title>
        <authorList>
            <person name="Esposito J.J."/>
            <person name="Frace A.M."/>
            <person name="Sammons S.A."/>
            <person name="Olsen-Rasmussen M."/>
            <person name="Osborne J."/>
            <person name="Wohlhueter R."/>
        </authorList>
    </citation>
    <scope>NUCLEOTIDE SEQUENCE [LARGE SCALE GENOMIC DNA]</scope>
</reference>
<reference key="3">
    <citation type="journal article" date="1996" name="Virology">
        <title>Vaccinia virus G4L gene encodes a second glutaredoxin.</title>
        <authorList>
            <person name="Gvakharia B.O."/>
            <person name="Koonin E.K."/>
            <person name="Mathews C.K."/>
        </authorList>
    </citation>
    <scope>FUNCTION</scope>
</reference>
<reference key="4">
    <citation type="journal article" date="2000" name="J. Virol.">
        <title>A glutaredoxin, encoded by the G4L gene of vaccinia virus, is essential for virion morphogenesis.</title>
        <authorList>
            <person name="White C.L."/>
            <person name="Weisberg A.S."/>
            <person name="Moss B."/>
        </authorList>
    </citation>
    <scope>FUNCTION</scope>
</reference>
<reference key="5">
    <citation type="journal article" date="2002" name="J. Virol.">
        <title>Vaccinia virus G4L glutaredoxin is an essential intermediate of a cytoplasmic disulfide bond pathway required for virion assembly.</title>
        <authorList>
            <person name="White C.L."/>
            <person name="Senkevich T.G."/>
            <person name="Moss B."/>
        </authorList>
    </citation>
    <scope>FUNCTION</scope>
    <scope>DISULFIDE BOND</scope>
    <scope>MUTAGENESIS OF CYS-13 AND CYS-16</scope>
</reference>
<reference key="6">
    <citation type="journal article" date="2002" name="Proc. Natl. Acad. Sci. U.S.A.">
        <title>Complete pathway for protein disulfide bond formation encoded by poxviruses.</title>
        <authorList>
            <person name="Senkevich T.G."/>
            <person name="White C.L."/>
            <person name="Koonin E.V."/>
            <person name="Moss B."/>
        </authorList>
    </citation>
    <scope>FUNCTION</scope>
</reference>
<reference key="7">
    <citation type="journal article" date="2015" name="J. Virol.">
        <title>Deciphering poxvirus gene expression by RNA sequencing and ribosome profiling.</title>
        <authorList>
            <person name="Yang Z."/>
            <person name="Cao S."/>
            <person name="Martens C.A."/>
            <person name="Porcella S.F."/>
            <person name="Xie Z."/>
            <person name="Ma M."/>
            <person name="Shen B."/>
            <person name="Moss B."/>
        </authorList>
    </citation>
    <scope>INDUCTION</scope>
</reference>
<reference key="8">
    <citation type="journal article" date="2006" name="J. Virol.">
        <title>The structure of G4, the poxvirus disulfide oxidoreductase essential for virus maturation and infectivity.</title>
        <authorList>
            <person name="Su H.P."/>
            <person name="Lin D.Y."/>
            <person name="Garboczi D.N."/>
        </authorList>
    </citation>
    <scope>X-RAY CRYSTALLOGRAPHY (2.5 ANGSTROMS)</scope>
    <scope>SUBUNIT</scope>
</reference>
<sequence>MKNVLIIFGKPYCSICENVSDAVEELKSEYDILHVDILSFFLKDGDSSMLGDVKRGTLIGNFAAHLSNYIVSIFKYNPQTKQMAFVDINKSLDFTKTDKSLVNLEILKSEIEKATYGVWPPVTE</sequence>
<feature type="chain" id="PRO_0000141629" description="Glutaredoxin-2">
    <location>
        <begin position="1"/>
        <end position="124"/>
    </location>
</feature>
<feature type="disulfide bond" description="Redox-active" evidence="2">
    <location>
        <begin position="13"/>
        <end position="16"/>
    </location>
</feature>
<feature type="mutagenesis site" description="Complete loss of substrate oxidation." evidence="2">
    <original>C</original>
    <variation>S</variation>
    <location>
        <position position="13"/>
    </location>
</feature>
<feature type="mutagenesis site" description="Partial loss of substrate oxidation." evidence="2">
    <original>C</original>
    <variation>S</variation>
    <location>
        <position position="16"/>
    </location>
</feature>
<feature type="strand" evidence="8">
    <location>
        <begin position="3"/>
        <end position="9"/>
    </location>
</feature>
<feature type="helix" evidence="8">
    <location>
        <begin position="14"/>
        <end position="24"/>
    </location>
</feature>
<feature type="turn" evidence="8">
    <location>
        <begin position="25"/>
        <end position="29"/>
    </location>
</feature>
<feature type="strand" evidence="8">
    <location>
        <begin position="30"/>
        <end position="36"/>
    </location>
</feature>
<feature type="helix" evidence="8">
    <location>
        <begin position="46"/>
        <end position="48"/>
    </location>
</feature>
<feature type="helix" evidence="8">
    <location>
        <begin position="58"/>
        <end position="65"/>
    </location>
</feature>
<feature type="helix" evidence="8">
    <location>
        <begin position="66"/>
        <end position="69"/>
    </location>
</feature>
<feature type="strand" evidence="8">
    <location>
        <begin position="71"/>
        <end position="77"/>
    </location>
</feature>
<feature type="turn" evidence="8">
    <location>
        <begin position="78"/>
        <end position="81"/>
    </location>
</feature>
<feature type="strand" evidence="8">
    <location>
        <begin position="82"/>
        <end position="85"/>
    </location>
</feature>
<feature type="helix" evidence="8">
    <location>
        <begin position="89"/>
        <end position="91"/>
    </location>
</feature>
<feature type="helix" evidence="8">
    <location>
        <begin position="99"/>
        <end position="101"/>
    </location>
</feature>
<feature type="helix" evidence="8">
    <location>
        <begin position="104"/>
        <end position="113"/>
    </location>
</feature>
<organismHost>
    <name type="scientific">Bos taurus</name>
    <name type="common">Bovine</name>
    <dbReference type="NCBI Taxonomy" id="9913"/>
</organismHost>
<dbReference type="EMBL" id="J03399">
    <property type="protein sequence ID" value="AAB59814.1"/>
    <property type="molecule type" value="Genomic_DNA"/>
</dbReference>
<dbReference type="EMBL" id="AY243312">
    <property type="protein sequence ID" value="AAO89360.1"/>
    <property type="molecule type" value="Genomic_DNA"/>
</dbReference>
<dbReference type="RefSeq" id="YP_232963.1">
    <property type="nucleotide sequence ID" value="NC_006998.1"/>
</dbReference>
<dbReference type="PDB" id="2G2Q">
    <property type="method" value="X-ray"/>
    <property type="resolution" value="2.50 A"/>
    <property type="chains" value="A/B/C=1-124"/>
</dbReference>
<dbReference type="PDBsum" id="2G2Q"/>
<dbReference type="SMR" id="P68460"/>
<dbReference type="DNASU" id="3707537"/>
<dbReference type="GeneID" id="3707537"/>
<dbReference type="KEGG" id="vg:3707537"/>
<dbReference type="EvolutionaryTrace" id="P68460"/>
<dbReference type="Proteomes" id="UP000000344">
    <property type="component" value="Genome"/>
</dbReference>
<dbReference type="GO" id="GO:0030430">
    <property type="term" value="C:host cell cytoplasm"/>
    <property type="evidence" value="ECO:0007669"/>
    <property type="project" value="UniProtKB-SubCell"/>
</dbReference>
<dbReference type="Gene3D" id="3.40.30.10">
    <property type="entry name" value="Glutaredoxin"/>
    <property type="match status" value="1"/>
</dbReference>
<dbReference type="InterPro" id="IPR008554">
    <property type="entry name" value="Glutaredoxin-like"/>
</dbReference>
<dbReference type="InterPro" id="IPR036249">
    <property type="entry name" value="Thioredoxin-like_sf"/>
</dbReference>
<dbReference type="Pfam" id="PF05768">
    <property type="entry name" value="Glrx-like"/>
    <property type="match status" value="1"/>
</dbReference>
<dbReference type="SUPFAM" id="SSF52833">
    <property type="entry name" value="Thioredoxin-like"/>
    <property type="match status" value="1"/>
</dbReference>
<protein>
    <recommendedName>
        <fullName>Glutaredoxin-2</fullName>
    </recommendedName>
</protein>
<evidence type="ECO:0000269" key="1">
    <source>
    </source>
</evidence>
<evidence type="ECO:0000269" key="2">
    <source>
    </source>
</evidence>
<evidence type="ECO:0000269" key="3">
    <source>
    </source>
</evidence>
<evidence type="ECO:0000269" key="4">
    <source>
    </source>
</evidence>
<evidence type="ECO:0000269" key="5">
    <source>
    </source>
</evidence>
<evidence type="ECO:0000269" key="6">
    <source>
    </source>
</evidence>
<evidence type="ECO:0000305" key="7"/>
<evidence type="ECO:0007829" key="8">
    <source>
        <dbReference type="PDB" id="2G2Q"/>
    </source>
</evidence>
<proteinExistence type="evidence at protein level"/>
<name>GLRX2_VACCW</name>
<keyword id="KW-0002">3D-structure</keyword>
<keyword id="KW-1015">Disulfide bond</keyword>
<keyword id="KW-0249">Electron transport</keyword>
<keyword id="KW-1035">Host cytoplasm</keyword>
<keyword id="KW-0676">Redox-active center</keyword>
<keyword id="KW-1185">Reference proteome</keyword>
<keyword id="KW-0813">Transport</keyword>